<feature type="chain" id="PRO_0000292638" description="Ribosomal RNA small subunit methyltransferase J">
    <location>
        <begin position="1"/>
        <end position="278"/>
    </location>
</feature>
<feature type="binding site" evidence="1">
    <location>
        <begin position="143"/>
        <end position="144"/>
    </location>
    <ligand>
        <name>S-adenosyl-L-methionine</name>
        <dbReference type="ChEBI" id="CHEBI:59789"/>
    </ligand>
</feature>
<feature type="binding site" evidence="1">
    <location>
        <position position="197"/>
    </location>
    <ligand>
        <name>S-adenosyl-L-methionine</name>
        <dbReference type="ChEBI" id="CHEBI:59789"/>
    </ligand>
</feature>
<keyword id="KW-0963">Cytoplasm</keyword>
<keyword id="KW-0489">Methyltransferase</keyword>
<keyword id="KW-0698">rRNA processing</keyword>
<keyword id="KW-0949">S-adenosyl-L-methionine</keyword>
<keyword id="KW-0808">Transferase</keyword>
<organism>
    <name type="scientific">Marinobacter nauticus (strain ATCC 700491 / DSM 11845 / VT8)</name>
    <name type="common">Marinobacter aquaeolei</name>
    <dbReference type="NCBI Taxonomy" id="351348"/>
    <lineage>
        <taxon>Bacteria</taxon>
        <taxon>Pseudomonadati</taxon>
        <taxon>Pseudomonadota</taxon>
        <taxon>Gammaproteobacteria</taxon>
        <taxon>Pseudomonadales</taxon>
        <taxon>Marinobacteraceae</taxon>
        <taxon>Marinobacter</taxon>
    </lineage>
</organism>
<sequence>MPSPSSHTELPDSSSLRHILAVAHSPLAEPGVARTLATELGLDWLGVVAPKQVRDYGLLLFMDEHGLALQQTGKGAPGPVRAEFVSGKMGYRREHGGGAGQLVARAVGMQKTRAPLQVLDATAGLGQDAFVLASLGCQMTLFERNPIIHALLADGLYRASLNEACAPIVARMTLHSGNSLDWMNQAGPEAVDVVYLDPMFPHRDKSALVKKEMQVFRQVVGDDDDASQLLEAALGCARYRVVVKRPRKAPAIAGPEPAARVEGKSSRYDIYPIRALPA</sequence>
<comment type="function">
    <text evidence="1">Specifically methylates the guanosine in position 1516 of 16S rRNA.</text>
</comment>
<comment type="catalytic activity">
    <reaction evidence="1">
        <text>guanosine(1516) in 16S rRNA + S-adenosyl-L-methionine = N(2)-methylguanosine(1516) in 16S rRNA + S-adenosyl-L-homocysteine + H(+)</text>
        <dbReference type="Rhea" id="RHEA:43220"/>
        <dbReference type="Rhea" id="RHEA-COMP:10412"/>
        <dbReference type="Rhea" id="RHEA-COMP:10413"/>
        <dbReference type="ChEBI" id="CHEBI:15378"/>
        <dbReference type="ChEBI" id="CHEBI:57856"/>
        <dbReference type="ChEBI" id="CHEBI:59789"/>
        <dbReference type="ChEBI" id="CHEBI:74269"/>
        <dbReference type="ChEBI" id="CHEBI:74481"/>
        <dbReference type="EC" id="2.1.1.242"/>
    </reaction>
</comment>
<comment type="subcellular location">
    <subcellularLocation>
        <location evidence="1">Cytoplasm</location>
    </subcellularLocation>
</comment>
<comment type="similarity">
    <text evidence="1">Belongs to the methyltransferase superfamily. RsmJ family.</text>
</comment>
<reference key="1">
    <citation type="journal article" date="2011" name="Appl. Environ. Microbiol.">
        <title>Genomic potential of Marinobacter aquaeolei, a biogeochemical 'opportunitroph'.</title>
        <authorList>
            <person name="Singer E."/>
            <person name="Webb E.A."/>
            <person name="Nelson W.C."/>
            <person name="Heidelberg J.F."/>
            <person name="Ivanova N."/>
            <person name="Pati A."/>
            <person name="Edwards K.J."/>
        </authorList>
    </citation>
    <scope>NUCLEOTIDE SEQUENCE [LARGE SCALE GENOMIC DNA]</scope>
    <source>
        <strain>ATCC 700491 / DSM 11845 / VT8</strain>
    </source>
</reference>
<accession>A1U2T9</accession>
<protein>
    <recommendedName>
        <fullName evidence="1">Ribosomal RNA small subunit methyltransferase J</fullName>
        <ecNumber evidence="1">2.1.1.242</ecNumber>
    </recommendedName>
    <alternativeName>
        <fullName evidence="1">16S rRNA m2G1516 methyltransferase</fullName>
    </alternativeName>
    <alternativeName>
        <fullName evidence="1">rRNA (guanine-N(2)-)-methyltransferase</fullName>
    </alternativeName>
</protein>
<proteinExistence type="inferred from homology"/>
<name>RSMJ_MARN8</name>
<evidence type="ECO:0000255" key="1">
    <source>
        <dbReference type="HAMAP-Rule" id="MF_01523"/>
    </source>
</evidence>
<dbReference type="EC" id="2.1.1.242" evidence="1"/>
<dbReference type="EMBL" id="CP000514">
    <property type="protein sequence ID" value="ABM19308.1"/>
    <property type="molecule type" value="Genomic_DNA"/>
</dbReference>
<dbReference type="RefSeq" id="WP_011785696.1">
    <property type="nucleotide sequence ID" value="NC_008740.1"/>
</dbReference>
<dbReference type="SMR" id="A1U2T9"/>
<dbReference type="STRING" id="351348.Maqu_2229"/>
<dbReference type="KEGG" id="maq:Maqu_2229"/>
<dbReference type="eggNOG" id="COG0742">
    <property type="taxonomic scope" value="Bacteria"/>
</dbReference>
<dbReference type="HOGENOM" id="CLU_076324_0_1_6"/>
<dbReference type="OrthoDB" id="3191794at2"/>
<dbReference type="Proteomes" id="UP000000998">
    <property type="component" value="Chromosome"/>
</dbReference>
<dbReference type="GO" id="GO:0005737">
    <property type="term" value="C:cytoplasm"/>
    <property type="evidence" value="ECO:0007669"/>
    <property type="project" value="UniProtKB-SubCell"/>
</dbReference>
<dbReference type="GO" id="GO:0008990">
    <property type="term" value="F:rRNA (guanine-N2-)-methyltransferase activity"/>
    <property type="evidence" value="ECO:0007669"/>
    <property type="project" value="UniProtKB-UniRule"/>
</dbReference>
<dbReference type="Gene3D" id="3.40.50.150">
    <property type="entry name" value="Vaccinia Virus protein VP39"/>
    <property type="match status" value="1"/>
</dbReference>
<dbReference type="HAMAP" id="MF_01523">
    <property type="entry name" value="16SrRNA_methyltr_J"/>
    <property type="match status" value="1"/>
</dbReference>
<dbReference type="InterPro" id="IPR007536">
    <property type="entry name" value="16SrRNA_methylTrfase_J"/>
</dbReference>
<dbReference type="InterPro" id="IPR029063">
    <property type="entry name" value="SAM-dependent_MTases_sf"/>
</dbReference>
<dbReference type="PANTHER" id="PTHR36112">
    <property type="entry name" value="RIBOSOMAL RNA SMALL SUBUNIT METHYLTRANSFERASE J"/>
    <property type="match status" value="1"/>
</dbReference>
<dbReference type="PANTHER" id="PTHR36112:SF1">
    <property type="entry name" value="RIBOSOMAL RNA SMALL SUBUNIT METHYLTRANSFERASE J"/>
    <property type="match status" value="1"/>
</dbReference>
<dbReference type="Pfam" id="PF04445">
    <property type="entry name" value="SAM_MT"/>
    <property type="match status" value="1"/>
</dbReference>
<dbReference type="SUPFAM" id="SSF53335">
    <property type="entry name" value="S-adenosyl-L-methionine-dependent methyltransferases"/>
    <property type="match status" value="1"/>
</dbReference>
<gene>
    <name evidence="1" type="primary">rsmJ</name>
    <name type="ordered locus">Maqu_2229</name>
</gene>